<reference key="1">
    <citation type="journal article" date="2006" name="Proc. Natl. Acad. Sci. U.S.A.">
        <title>Identification of genes subject to positive selection in uropathogenic strains of Escherichia coli: a comparative genomics approach.</title>
        <authorList>
            <person name="Chen S.L."/>
            <person name="Hung C.-S."/>
            <person name="Xu J."/>
            <person name="Reigstad C.S."/>
            <person name="Magrini V."/>
            <person name="Sabo A."/>
            <person name="Blasiar D."/>
            <person name="Bieri T."/>
            <person name="Meyer R.R."/>
            <person name="Ozersky P."/>
            <person name="Armstrong J.R."/>
            <person name="Fulton R.S."/>
            <person name="Latreille J.P."/>
            <person name="Spieth J."/>
            <person name="Hooton T.M."/>
            <person name="Mardis E.R."/>
            <person name="Hultgren S.J."/>
            <person name="Gordon J.I."/>
        </authorList>
    </citation>
    <scope>NUCLEOTIDE SEQUENCE [LARGE SCALE GENOMIC DNA]</scope>
    <source>
        <strain>UTI89 / UPEC</strain>
    </source>
</reference>
<accession>Q1R5J6</accession>
<gene>
    <name evidence="1" type="primary">glgC</name>
    <name type="ordered locus">UTI89_C3939</name>
</gene>
<sequence length="431" mass="48668">MVSLEKNDHLMLARQLPLKSVALILAGGRGTRLKDLTNKRAKPAVHFGGKFRIIDFALSNCINSGIRRMGVITQYQSHTLVQHIQRGWSFFNEEMNEFVDLLPAQQRMKGENWYRGTADAVTQNLDIIRRYKAEYVVILAGDHIYKQDYSRMLIDHVEKGARCTVACMPVPIEEASAFGVMAVDENDKIIEFVEKPANPPSMPNDPGKSLASMGIYVFDADYLYELLEEDDRDENSSHDFGKDLIPKITEAGLAYAHPFPLSCVQSDPDAEPYWRDVGTLEAYWKANLDLASVVPELDMYDRNWPIRTYNESLPPAKFVQDRSGSHGMTLNSLVSGGCVISGSVVVQSVLFSRVRVNSFCNIDSAVLLPEVWVGRSCRLRRCVIDRACVIPEGMVIGENAEEDARRFYRSEEGIVLVTREMLRKLGHKQER</sequence>
<organism>
    <name type="scientific">Escherichia coli (strain UTI89 / UPEC)</name>
    <dbReference type="NCBI Taxonomy" id="364106"/>
    <lineage>
        <taxon>Bacteria</taxon>
        <taxon>Pseudomonadati</taxon>
        <taxon>Pseudomonadota</taxon>
        <taxon>Gammaproteobacteria</taxon>
        <taxon>Enterobacterales</taxon>
        <taxon>Enterobacteriaceae</taxon>
        <taxon>Escherichia</taxon>
    </lineage>
</organism>
<dbReference type="EC" id="2.7.7.27" evidence="1"/>
<dbReference type="EMBL" id="CP000243">
    <property type="protein sequence ID" value="ABE09368.1"/>
    <property type="status" value="ALT_INIT"/>
    <property type="molecule type" value="Genomic_DNA"/>
</dbReference>
<dbReference type="RefSeq" id="WP_000253971.1">
    <property type="nucleotide sequence ID" value="NZ_CP064825.1"/>
</dbReference>
<dbReference type="SMR" id="Q1R5J6"/>
<dbReference type="KEGG" id="eci:UTI89_C3939"/>
<dbReference type="HOGENOM" id="CLU_029499_14_1_6"/>
<dbReference type="UniPathway" id="UPA00164"/>
<dbReference type="Proteomes" id="UP000001952">
    <property type="component" value="Chromosome"/>
</dbReference>
<dbReference type="GO" id="GO:0005524">
    <property type="term" value="F:ATP binding"/>
    <property type="evidence" value="ECO:0007669"/>
    <property type="project" value="UniProtKB-KW"/>
</dbReference>
<dbReference type="GO" id="GO:0008878">
    <property type="term" value="F:glucose-1-phosphate adenylyltransferase activity"/>
    <property type="evidence" value="ECO:0007669"/>
    <property type="project" value="UniProtKB-UniRule"/>
</dbReference>
<dbReference type="GO" id="GO:0005978">
    <property type="term" value="P:glycogen biosynthetic process"/>
    <property type="evidence" value="ECO:0007669"/>
    <property type="project" value="UniProtKB-UniRule"/>
</dbReference>
<dbReference type="CDD" id="cd02508">
    <property type="entry name" value="ADP_Glucose_PP"/>
    <property type="match status" value="1"/>
</dbReference>
<dbReference type="CDD" id="cd04651">
    <property type="entry name" value="LbH_G1P_AT_C"/>
    <property type="match status" value="1"/>
</dbReference>
<dbReference type="FunFam" id="2.160.10.10:FF:000006">
    <property type="entry name" value="Glucose-1-phosphate adenylyltransferase"/>
    <property type="match status" value="1"/>
</dbReference>
<dbReference type="FunFam" id="3.90.550.10:FF:000014">
    <property type="entry name" value="Glucose-1-phosphate adenylyltransferase"/>
    <property type="match status" value="1"/>
</dbReference>
<dbReference type="Gene3D" id="2.160.10.10">
    <property type="entry name" value="Hexapeptide repeat proteins"/>
    <property type="match status" value="1"/>
</dbReference>
<dbReference type="Gene3D" id="3.90.550.10">
    <property type="entry name" value="Spore Coat Polysaccharide Biosynthesis Protein SpsA, Chain A"/>
    <property type="match status" value="1"/>
</dbReference>
<dbReference type="HAMAP" id="MF_00624">
    <property type="entry name" value="GlgC"/>
    <property type="match status" value="1"/>
</dbReference>
<dbReference type="InterPro" id="IPR011831">
    <property type="entry name" value="ADP-Glc_PPase"/>
</dbReference>
<dbReference type="InterPro" id="IPR005836">
    <property type="entry name" value="ADP_Glu_pyroP_CS"/>
</dbReference>
<dbReference type="InterPro" id="IPR023049">
    <property type="entry name" value="GlgC_bac"/>
</dbReference>
<dbReference type="InterPro" id="IPR056818">
    <property type="entry name" value="GlmU/GlgC-like_hexapep"/>
</dbReference>
<dbReference type="InterPro" id="IPR005835">
    <property type="entry name" value="NTP_transferase_dom"/>
</dbReference>
<dbReference type="InterPro" id="IPR029044">
    <property type="entry name" value="Nucleotide-diphossugar_trans"/>
</dbReference>
<dbReference type="InterPro" id="IPR011004">
    <property type="entry name" value="Trimer_LpxA-like_sf"/>
</dbReference>
<dbReference type="NCBIfam" id="TIGR02091">
    <property type="entry name" value="glgC"/>
    <property type="match status" value="1"/>
</dbReference>
<dbReference type="NCBIfam" id="NF001947">
    <property type="entry name" value="PRK00725.1"/>
    <property type="match status" value="1"/>
</dbReference>
<dbReference type="NCBIfam" id="NF002023">
    <property type="entry name" value="PRK00844.1"/>
    <property type="match status" value="1"/>
</dbReference>
<dbReference type="PANTHER" id="PTHR43523:SF2">
    <property type="entry name" value="GLUCOSE-1-PHOSPHATE ADENYLYLTRANSFERASE"/>
    <property type="match status" value="1"/>
</dbReference>
<dbReference type="PANTHER" id="PTHR43523">
    <property type="entry name" value="GLUCOSE-1-PHOSPHATE ADENYLYLTRANSFERASE-RELATED"/>
    <property type="match status" value="1"/>
</dbReference>
<dbReference type="Pfam" id="PF24894">
    <property type="entry name" value="Hexapep_GlmU"/>
    <property type="match status" value="1"/>
</dbReference>
<dbReference type="Pfam" id="PF00483">
    <property type="entry name" value="NTP_transferase"/>
    <property type="match status" value="1"/>
</dbReference>
<dbReference type="SUPFAM" id="SSF53448">
    <property type="entry name" value="Nucleotide-diphospho-sugar transferases"/>
    <property type="match status" value="1"/>
</dbReference>
<dbReference type="SUPFAM" id="SSF51161">
    <property type="entry name" value="Trimeric LpxA-like enzymes"/>
    <property type="match status" value="1"/>
</dbReference>
<dbReference type="PROSITE" id="PS00808">
    <property type="entry name" value="ADP_GLC_PYROPHOSPH_1"/>
    <property type="match status" value="1"/>
</dbReference>
<dbReference type="PROSITE" id="PS00809">
    <property type="entry name" value="ADP_GLC_PYROPHOSPH_2"/>
    <property type="match status" value="1"/>
</dbReference>
<dbReference type="PROSITE" id="PS00810">
    <property type="entry name" value="ADP_GLC_PYROPHOSPH_3"/>
    <property type="match status" value="1"/>
</dbReference>
<keyword id="KW-0021">Allosteric enzyme</keyword>
<keyword id="KW-0067">ATP-binding</keyword>
<keyword id="KW-0119">Carbohydrate metabolism</keyword>
<keyword id="KW-0320">Glycogen biosynthesis</keyword>
<keyword id="KW-0321">Glycogen metabolism</keyword>
<keyword id="KW-0547">Nucleotide-binding</keyword>
<keyword id="KW-0548">Nucleotidyltransferase</keyword>
<keyword id="KW-0808">Transferase</keyword>
<name>GLGC_ECOUT</name>
<proteinExistence type="inferred from homology"/>
<protein>
    <recommendedName>
        <fullName evidence="1">Glucose-1-phosphate adenylyltransferase</fullName>
        <ecNumber evidence="1">2.7.7.27</ecNumber>
    </recommendedName>
    <alternativeName>
        <fullName evidence="1">ADP-glucose pyrophosphorylase</fullName>
        <shortName evidence="1">ADPGlc PPase</shortName>
    </alternativeName>
    <alternativeName>
        <fullName evidence="1">ADP-glucose synthase</fullName>
    </alternativeName>
</protein>
<comment type="function">
    <text evidence="1">Involved in the biosynthesis of ADP-glucose, a building block required for the elongation reactions to produce glycogen. Catalyzes the reaction between ATP and alpha-D-glucose 1-phosphate (G1P) to produce pyrophosphate and ADP-Glc.</text>
</comment>
<comment type="catalytic activity">
    <reaction evidence="1">
        <text>alpha-D-glucose 1-phosphate + ATP + H(+) = ADP-alpha-D-glucose + diphosphate</text>
        <dbReference type="Rhea" id="RHEA:12120"/>
        <dbReference type="ChEBI" id="CHEBI:15378"/>
        <dbReference type="ChEBI" id="CHEBI:30616"/>
        <dbReference type="ChEBI" id="CHEBI:33019"/>
        <dbReference type="ChEBI" id="CHEBI:57498"/>
        <dbReference type="ChEBI" id="CHEBI:58601"/>
        <dbReference type="EC" id="2.7.7.27"/>
    </reaction>
</comment>
<comment type="activity regulation">
    <text evidence="1">Allosterically activated by fructose-1,6-bisphosphate (F16BP) and inhibited by AMP.</text>
</comment>
<comment type="pathway">
    <text evidence="1">Glycan biosynthesis; glycogen biosynthesis.</text>
</comment>
<comment type="subunit">
    <text evidence="1">Homotetramer.</text>
</comment>
<comment type="similarity">
    <text evidence="1">Belongs to the bacterial/plant glucose-1-phosphate adenylyltransferase family.</text>
</comment>
<comment type="sequence caution" evidence="2">
    <conflict type="erroneous initiation">
        <sequence resource="EMBL-CDS" id="ABE09368"/>
    </conflict>
</comment>
<evidence type="ECO:0000255" key="1">
    <source>
        <dbReference type="HAMAP-Rule" id="MF_00624"/>
    </source>
</evidence>
<evidence type="ECO:0000305" key="2"/>
<feature type="chain" id="PRO_0000261867" description="Glucose-1-phosphate adenylyltransferase">
    <location>
        <begin position="1"/>
        <end position="431"/>
    </location>
</feature>
<feature type="binding site" evidence="1">
    <location>
        <position position="39"/>
    </location>
    <ligand>
        <name>beta-D-fructose 1,6-bisphosphate</name>
        <dbReference type="ChEBI" id="CHEBI:32966"/>
    </ligand>
</feature>
<feature type="binding site" evidence="1">
    <location>
        <position position="40"/>
    </location>
    <ligand>
        <name>AMP</name>
        <dbReference type="ChEBI" id="CHEBI:456215"/>
    </ligand>
</feature>
<feature type="binding site" evidence="1">
    <location>
        <position position="46"/>
    </location>
    <ligand>
        <name>AMP</name>
        <dbReference type="ChEBI" id="CHEBI:456215"/>
    </ligand>
</feature>
<feature type="binding site" evidence="1">
    <location>
        <position position="52"/>
    </location>
    <ligand>
        <name>AMP</name>
        <dbReference type="ChEBI" id="CHEBI:456215"/>
    </ligand>
</feature>
<feature type="binding site" evidence="1">
    <location>
        <position position="114"/>
    </location>
    <ligand>
        <name>alpha-D-glucose 1-phosphate</name>
        <dbReference type="ChEBI" id="CHEBI:58601"/>
    </ligand>
</feature>
<feature type="binding site" evidence="1">
    <location>
        <position position="130"/>
    </location>
    <ligand>
        <name>AMP</name>
        <dbReference type="ChEBI" id="CHEBI:456215"/>
    </ligand>
</feature>
<feature type="binding site" evidence="1">
    <location>
        <position position="179"/>
    </location>
    <ligand>
        <name>alpha-D-glucose 1-phosphate</name>
        <dbReference type="ChEBI" id="CHEBI:58601"/>
    </ligand>
</feature>
<feature type="binding site" evidence="1">
    <location>
        <begin position="194"/>
        <end position="195"/>
    </location>
    <ligand>
        <name>alpha-D-glucose 1-phosphate</name>
        <dbReference type="ChEBI" id="CHEBI:58601"/>
    </ligand>
</feature>
<feature type="binding site" evidence="1">
    <location>
        <position position="212"/>
    </location>
    <ligand>
        <name>alpha-D-glucose 1-phosphate</name>
        <dbReference type="ChEBI" id="CHEBI:58601"/>
    </ligand>
</feature>
<feature type="binding site" evidence="1">
    <location>
        <position position="370"/>
    </location>
    <ligand>
        <name>AMP</name>
        <dbReference type="ChEBI" id="CHEBI:456215"/>
    </ligand>
</feature>
<feature type="binding site" evidence="1">
    <location>
        <position position="386"/>
    </location>
    <ligand>
        <name>AMP</name>
        <dbReference type="ChEBI" id="CHEBI:456215"/>
    </ligand>
</feature>
<feature type="binding site" evidence="1">
    <location>
        <begin position="419"/>
        <end position="423"/>
    </location>
    <ligand>
        <name>beta-D-fructose 1,6-bisphosphate</name>
        <dbReference type="ChEBI" id="CHEBI:32966"/>
    </ligand>
</feature>
<feature type="binding site" evidence="1">
    <location>
        <begin position="429"/>
        <end position="431"/>
    </location>
    <ligand>
        <name>beta-D-fructose 1,6-bisphosphate</name>
        <dbReference type="ChEBI" id="CHEBI:32966"/>
    </ligand>
</feature>
<feature type="site" description="Could play a key role in the communication between the regulatory and the substrate sites" evidence="1">
    <location>
        <position position="74"/>
    </location>
</feature>
<feature type="site" description="Could play a key role in the communication between the regulatory and the substrate sites" evidence="1">
    <location>
        <position position="113"/>
    </location>
</feature>